<protein>
    <recommendedName>
        <fullName>GTP pyrophosphokinase</fullName>
        <ecNumber>2.7.6.5</ecNumber>
    </recommendedName>
    <alternativeName>
        <fullName>(p)ppGpp synthase</fullName>
    </alternativeName>
    <alternativeName>
        <fullName>ATP:GTP 3'-pyrophosphotransferase</fullName>
    </alternativeName>
    <alternativeName>
        <fullName>ppGpp synthase I</fullName>
    </alternativeName>
</protein>
<feature type="chain" id="PRO_0000166564" description="GTP pyrophosphokinase">
    <location>
        <begin position="1"/>
        <end position="847"/>
    </location>
</feature>
<feature type="domain" description="HD" evidence="3">
    <location>
        <begin position="149"/>
        <end position="246"/>
    </location>
</feature>
<feature type="domain" description="TGS" evidence="4">
    <location>
        <begin position="503"/>
        <end position="564"/>
    </location>
</feature>
<feature type="domain" description="ACT" evidence="2">
    <location>
        <begin position="768"/>
        <end position="842"/>
    </location>
</feature>
<feature type="region of interest" description="Disordered" evidence="5">
    <location>
        <begin position="1"/>
        <end position="85"/>
    </location>
</feature>
<feature type="region of interest" description="Disordered" evidence="5">
    <location>
        <begin position="671"/>
        <end position="694"/>
    </location>
</feature>
<feature type="compositionally biased region" description="Low complexity" evidence="5">
    <location>
        <begin position="10"/>
        <end position="31"/>
    </location>
</feature>
<feature type="sequence conflict" description="In Ref. 2; CAA63297." evidence="6" ref="2">
    <original>V</original>
    <variation>L</variation>
    <location>
        <position position="197"/>
    </location>
</feature>
<gene>
    <name type="primary">relA</name>
    <name type="ordered locus">SCO1513</name>
    <name type="ORF">SCL2.03c</name>
</gene>
<dbReference type="EC" id="2.7.6.5"/>
<dbReference type="EMBL" id="X87267">
    <property type="protein sequence ID" value="CAA60717.1"/>
    <property type="molecule type" value="Genomic_DNA"/>
</dbReference>
<dbReference type="EMBL" id="X92520">
    <property type="protein sequence ID" value="CAA63297.1"/>
    <property type="molecule type" value="Genomic_DNA"/>
</dbReference>
<dbReference type="EMBL" id="AL939109">
    <property type="protein sequence ID" value="CAB70915.1"/>
    <property type="molecule type" value="Genomic_DNA"/>
</dbReference>
<dbReference type="PIR" id="S70687">
    <property type="entry name" value="S70687"/>
</dbReference>
<dbReference type="RefSeq" id="NP_625792.1">
    <property type="nucleotide sequence ID" value="NC_003888.3"/>
</dbReference>
<dbReference type="RefSeq" id="WP_003977314.1">
    <property type="nucleotide sequence ID" value="NZ_VNID01000021.1"/>
</dbReference>
<dbReference type="SMR" id="P52560"/>
<dbReference type="FunCoup" id="P52560">
    <property type="interactions" value="186"/>
</dbReference>
<dbReference type="STRING" id="100226.gene:17759099"/>
<dbReference type="PaxDb" id="100226-SCO1513"/>
<dbReference type="KEGG" id="sco:SCO1513"/>
<dbReference type="PATRIC" id="fig|100226.15.peg.1522"/>
<dbReference type="eggNOG" id="COG0317">
    <property type="taxonomic scope" value="Bacteria"/>
</dbReference>
<dbReference type="HOGENOM" id="CLU_012300_3_0_11"/>
<dbReference type="InParanoid" id="P52560"/>
<dbReference type="OrthoDB" id="9805041at2"/>
<dbReference type="PhylomeDB" id="P52560"/>
<dbReference type="UniPathway" id="UPA00908">
    <property type="reaction ID" value="UER00884"/>
</dbReference>
<dbReference type="Proteomes" id="UP000001973">
    <property type="component" value="Chromosome"/>
</dbReference>
<dbReference type="GO" id="GO:0005524">
    <property type="term" value="F:ATP binding"/>
    <property type="evidence" value="ECO:0007669"/>
    <property type="project" value="UniProtKB-KW"/>
</dbReference>
<dbReference type="GO" id="GO:0005525">
    <property type="term" value="F:GTP binding"/>
    <property type="evidence" value="ECO:0007669"/>
    <property type="project" value="UniProtKB-KW"/>
</dbReference>
<dbReference type="GO" id="GO:0008728">
    <property type="term" value="F:GTP diphosphokinase activity"/>
    <property type="evidence" value="ECO:0007669"/>
    <property type="project" value="UniProtKB-EC"/>
</dbReference>
<dbReference type="GO" id="GO:0016301">
    <property type="term" value="F:kinase activity"/>
    <property type="evidence" value="ECO:0007669"/>
    <property type="project" value="UniProtKB-KW"/>
</dbReference>
<dbReference type="GO" id="GO:0015970">
    <property type="term" value="P:guanosine tetraphosphate biosynthetic process"/>
    <property type="evidence" value="ECO:0000315"/>
    <property type="project" value="CACAO"/>
</dbReference>
<dbReference type="CDD" id="cd04876">
    <property type="entry name" value="ACT_RelA-SpoT"/>
    <property type="match status" value="1"/>
</dbReference>
<dbReference type="CDD" id="cd00077">
    <property type="entry name" value="HDc"/>
    <property type="match status" value="1"/>
</dbReference>
<dbReference type="CDD" id="cd05399">
    <property type="entry name" value="NT_Rel-Spo_like"/>
    <property type="match status" value="1"/>
</dbReference>
<dbReference type="CDD" id="cd01668">
    <property type="entry name" value="TGS_RSH"/>
    <property type="match status" value="1"/>
</dbReference>
<dbReference type="FunFam" id="3.10.20.30:FF:000002">
    <property type="entry name" value="GTP pyrophosphokinase (RelA/SpoT)"/>
    <property type="match status" value="1"/>
</dbReference>
<dbReference type="FunFam" id="1.10.3210.10:FF:000001">
    <property type="entry name" value="GTP pyrophosphokinase RelA"/>
    <property type="match status" value="1"/>
</dbReference>
<dbReference type="FunFam" id="3.30.460.10:FF:000001">
    <property type="entry name" value="GTP pyrophosphokinase RelA"/>
    <property type="match status" value="1"/>
</dbReference>
<dbReference type="FunFam" id="3.30.70.260:FF:000003">
    <property type="entry name" value="GTP pyrophosphokinase RelA"/>
    <property type="match status" value="1"/>
</dbReference>
<dbReference type="Gene3D" id="3.10.20.30">
    <property type="match status" value="1"/>
</dbReference>
<dbReference type="Gene3D" id="3.30.70.260">
    <property type="match status" value="1"/>
</dbReference>
<dbReference type="Gene3D" id="3.30.460.10">
    <property type="entry name" value="Beta Polymerase, domain 2"/>
    <property type="match status" value="1"/>
</dbReference>
<dbReference type="Gene3D" id="1.10.3210.10">
    <property type="entry name" value="Hypothetical protein af1432"/>
    <property type="match status" value="1"/>
</dbReference>
<dbReference type="InterPro" id="IPR045865">
    <property type="entry name" value="ACT-like_dom_sf"/>
</dbReference>
<dbReference type="InterPro" id="IPR002912">
    <property type="entry name" value="ACT_dom"/>
</dbReference>
<dbReference type="InterPro" id="IPR012675">
    <property type="entry name" value="Beta-grasp_dom_sf"/>
</dbReference>
<dbReference type="InterPro" id="IPR003607">
    <property type="entry name" value="HD/PDEase_dom"/>
</dbReference>
<dbReference type="InterPro" id="IPR006674">
    <property type="entry name" value="HD_domain"/>
</dbReference>
<dbReference type="InterPro" id="IPR043519">
    <property type="entry name" value="NT_sf"/>
</dbReference>
<dbReference type="InterPro" id="IPR004811">
    <property type="entry name" value="RelA/Spo_fam"/>
</dbReference>
<dbReference type="InterPro" id="IPR045600">
    <property type="entry name" value="RelA/SpoT_AH_RIS"/>
</dbReference>
<dbReference type="InterPro" id="IPR007685">
    <property type="entry name" value="RelA_SpoT"/>
</dbReference>
<dbReference type="InterPro" id="IPR004095">
    <property type="entry name" value="TGS"/>
</dbReference>
<dbReference type="InterPro" id="IPR012676">
    <property type="entry name" value="TGS-like"/>
</dbReference>
<dbReference type="InterPro" id="IPR033655">
    <property type="entry name" value="TGS_RelA/SpoT"/>
</dbReference>
<dbReference type="NCBIfam" id="TIGR00691">
    <property type="entry name" value="spoT_relA"/>
    <property type="match status" value="1"/>
</dbReference>
<dbReference type="PANTHER" id="PTHR21262:SF31">
    <property type="entry name" value="GTP PYROPHOSPHOKINASE"/>
    <property type="match status" value="1"/>
</dbReference>
<dbReference type="PANTHER" id="PTHR21262">
    <property type="entry name" value="GUANOSINE-3',5'-BIS DIPHOSPHATE 3'-PYROPHOSPHOHYDROLASE"/>
    <property type="match status" value="1"/>
</dbReference>
<dbReference type="Pfam" id="PF13291">
    <property type="entry name" value="ACT_4"/>
    <property type="match status" value="1"/>
</dbReference>
<dbReference type="Pfam" id="PF13328">
    <property type="entry name" value="HD_4"/>
    <property type="match status" value="1"/>
</dbReference>
<dbReference type="Pfam" id="PF19296">
    <property type="entry name" value="RelA_AH_RIS"/>
    <property type="match status" value="1"/>
</dbReference>
<dbReference type="Pfam" id="PF04607">
    <property type="entry name" value="RelA_SpoT"/>
    <property type="match status" value="1"/>
</dbReference>
<dbReference type="Pfam" id="PF02824">
    <property type="entry name" value="TGS"/>
    <property type="match status" value="1"/>
</dbReference>
<dbReference type="SMART" id="SM00471">
    <property type="entry name" value="HDc"/>
    <property type="match status" value="1"/>
</dbReference>
<dbReference type="SMART" id="SM00954">
    <property type="entry name" value="RelA_SpoT"/>
    <property type="match status" value="1"/>
</dbReference>
<dbReference type="SUPFAM" id="SSF55021">
    <property type="entry name" value="ACT-like"/>
    <property type="match status" value="1"/>
</dbReference>
<dbReference type="SUPFAM" id="SSF109604">
    <property type="entry name" value="HD-domain/PDEase-like"/>
    <property type="match status" value="1"/>
</dbReference>
<dbReference type="SUPFAM" id="SSF81301">
    <property type="entry name" value="Nucleotidyltransferase"/>
    <property type="match status" value="1"/>
</dbReference>
<dbReference type="SUPFAM" id="SSF81271">
    <property type="entry name" value="TGS-like"/>
    <property type="match status" value="1"/>
</dbReference>
<dbReference type="PROSITE" id="PS51671">
    <property type="entry name" value="ACT"/>
    <property type="match status" value="1"/>
</dbReference>
<dbReference type="PROSITE" id="PS51831">
    <property type="entry name" value="HD"/>
    <property type="match status" value="1"/>
</dbReference>
<dbReference type="PROSITE" id="PS51880">
    <property type="entry name" value="TGS"/>
    <property type="match status" value="1"/>
</dbReference>
<name>RELA_STRCO</name>
<keyword id="KW-0067">ATP-binding</keyword>
<keyword id="KW-0342">GTP-binding</keyword>
<keyword id="KW-0418">Kinase</keyword>
<keyword id="KW-0547">Nucleotide-binding</keyword>
<keyword id="KW-1185">Reference proteome</keyword>
<keyword id="KW-0346">Stress response</keyword>
<keyword id="KW-0808">Transferase</keyword>
<accession>P52560</accession>
<accession>P72401</accession>
<reference key="1">
    <citation type="journal article" date="1996" name="Mol. Microbiol.">
        <title>Cloning, characterization and disruption of a (p)ppGpp synthetase gene (relA) of Streptomyces coelicolor A3(2).</title>
        <authorList>
            <person name="Chakraburtty R."/>
            <person name="White J."/>
            <person name="Takano E."/>
            <person name="Bibb M.J."/>
        </authorList>
    </citation>
    <scope>NUCLEOTIDE SEQUENCE [GENOMIC DNA]</scope>
    <source>
        <strain>ATCC BAA-471 / A3(2) / M145</strain>
    </source>
</reference>
<reference key="2">
    <citation type="journal article" date="1996" name="J. Biol. Chem.">
        <title>A relA/spoT homologous gene from Streptomyces coelicolor A3(2) controls antibiotic biosynthetic genes.</title>
        <authorList>
            <person name="Martinez-Costa O.H."/>
            <person name="Arias P."/>
            <person name="Romero N.M."/>
            <person name="Parro V."/>
            <person name="Mellado R.P."/>
            <person name="Malpartida F."/>
        </authorList>
    </citation>
    <scope>NUCLEOTIDE SEQUENCE [GENOMIC DNA]</scope>
    <source>
        <strain>A3(2) / J802</strain>
    </source>
</reference>
<reference key="3">
    <citation type="journal article" date="2002" name="Nature">
        <title>Complete genome sequence of the model actinomycete Streptomyces coelicolor A3(2).</title>
        <authorList>
            <person name="Bentley S.D."/>
            <person name="Chater K.F."/>
            <person name="Cerdeno-Tarraga A.-M."/>
            <person name="Challis G.L."/>
            <person name="Thomson N.R."/>
            <person name="James K.D."/>
            <person name="Harris D.E."/>
            <person name="Quail M.A."/>
            <person name="Kieser H."/>
            <person name="Harper D."/>
            <person name="Bateman A."/>
            <person name="Brown S."/>
            <person name="Chandra G."/>
            <person name="Chen C.W."/>
            <person name="Collins M."/>
            <person name="Cronin A."/>
            <person name="Fraser A."/>
            <person name="Goble A."/>
            <person name="Hidalgo J."/>
            <person name="Hornsby T."/>
            <person name="Howarth S."/>
            <person name="Huang C.-H."/>
            <person name="Kieser T."/>
            <person name="Larke L."/>
            <person name="Murphy L.D."/>
            <person name="Oliver K."/>
            <person name="O'Neil S."/>
            <person name="Rabbinowitsch E."/>
            <person name="Rajandream M.A."/>
            <person name="Rutherford K.M."/>
            <person name="Rutter S."/>
            <person name="Seeger K."/>
            <person name="Saunders D."/>
            <person name="Sharp S."/>
            <person name="Squares R."/>
            <person name="Squares S."/>
            <person name="Taylor K."/>
            <person name="Warren T."/>
            <person name="Wietzorrek A."/>
            <person name="Woodward J.R."/>
            <person name="Barrell B.G."/>
            <person name="Parkhill J."/>
            <person name="Hopwood D.A."/>
        </authorList>
    </citation>
    <scope>NUCLEOTIDE SEQUENCE [LARGE SCALE GENOMIC DNA]</scope>
    <source>
        <strain>ATCC BAA-471 / A3(2) / M145</strain>
    </source>
</reference>
<sequence length="847" mass="94182">MPDEAQPLTAAKPESASASAAKPAPSAPQAKNDTHGPIQHAPAAPVDKPAEQQPRPKPLPAERPQNAPVVRAPAGQPARSGSSNRVRARLARLGVQRANPYNPVLEPLLRIVRGNDPKIETSTLRQIERAYQVAERWHRGQKRKSGDPYITHPLAVTTILAELGMDPATLMAGLLHDTVEDTEYGLEDLRRDFGDVVTLLVDGVTKLDKVKFGEAAQAETVRKMVVAMAKDPRVLVIKLADRLHNMRTMRYLKREKQEKKARETLEIYAPLAHRLGMNTIKWELEDLAFAILYPKMYDEIVRLVAERAPKRDEYLAVVTDEVQQDLRAARIKATVTGRPKHYYSVYQKMIVRGRDFAEIYDLVGIRVLVDTVRDCYAALGTVHARWNPVPGRFKDYIAMPKFNMYQSLHTTVIGPGGKPVELQIRTFDMHRRAEYGIAAHWKYKQEAVAGASKVRTDAPKSSGKSKDDHLNDMAWLRQLLDWQKETEDPGEFLESLRFDLSRNEVFVFTPKGDVIALPAGATPVDFAYAVHTEVGHRTIGARVNGRLVPLESTLDNGDLVEVFTSKAAGAGPSRDWLGFVKSPRARNKIRAWFSKERRDEAIEQGKDAIVRAMRKQNLPIQRILTGDSLVTLAHEMRYSDISALYAAIGEGHVSAPNIVQKLVQALGGEEAATEEIDESVPPSRGRGRKRRANADPGVVVKGVEDVWVKLARCCTPVPGDPIIGFVTRGSGVSVHRSDCVNVDSLSREPERILEVEWAPTQSSVFLVAIQVEALDRSRLLSDVTRVLSDQHVNILSAAVQTSRDRVATSRFTFEMGDPKHLGHVLKAVRGVEGVYDVYRVTSARRPS</sequence>
<proteinExistence type="inferred from homology"/>
<evidence type="ECO:0000250" key="1"/>
<evidence type="ECO:0000255" key="2">
    <source>
        <dbReference type="PROSITE-ProRule" id="PRU01007"/>
    </source>
</evidence>
<evidence type="ECO:0000255" key="3">
    <source>
        <dbReference type="PROSITE-ProRule" id="PRU01175"/>
    </source>
</evidence>
<evidence type="ECO:0000255" key="4">
    <source>
        <dbReference type="PROSITE-ProRule" id="PRU01228"/>
    </source>
</evidence>
<evidence type="ECO:0000256" key="5">
    <source>
        <dbReference type="SAM" id="MobiDB-lite"/>
    </source>
</evidence>
<evidence type="ECO:0000305" key="6"/>
<organism>
    <name type="scientific">Streptomyces coelicolor (strain ATCC BAA-471 / A3(2) / M145)</name>
    <dbReference type="NCBI Taxonomy" id="100226"/>
    <lineage>
        <taxon>Bacteria</taxon>
        <taxon>Bacillati</taxon>
        <taxon>Actinomycetota</taxon>
        <taxon>Actinomycetes</taxon>
        <taxon>Kitasatosporales</taxon>
        <taxon>Streptomycetaceae</taxon>
        <taxon>Streptomyces</taxon>
        <taxon>Streptomyces albidoflavus group</taxon>
    </lineage>
</organism>
<comment type="function">
    <text>In eubacteria ppGpp (guanosine 3'-diphosphate 5'-diphosphate) is a mediator of the stringent response that coordinates a variety of cellular activities in response to changes in nutritional abundance. This enzyme catalyzes the formation of pppGpp which is then hydrolyzed to form ppGpp. PppGpp could play an essential role in triggering antibiotic production under some nutritional conditions.</text>
</comment>
<comment type="catalytic activity">
    <reaction>
        <text>GTP + ATP = guanosine 3'-diphosphate 5'-triphosphate + AMP</text>
        <dbReference type="Rhea" id="RHEA:22088"/>
        <dbReference type="ChEBI" id="CHEBI:30616"/>
        <dbReference type="ChEBI" id="CHEBI:37565"/>
        <dbReference type="ChEBI" id="CHEBI:142410"/>
        <dbReference type="ChEBI" id="CHEBI:456215"/>
        <dbReference type="EC" id="2.7.6.5"/>
    </reaction>
</comment>
<comment type="pathway">
    <text>Purine metabolism; ppGpp biosynthesis; ppGpp from GTP: step 1/2.</text>
</comment>
<comment type="induction">
    <text evidence="1">By amino acid starvation. Activation through the binding of uncharged tRNA in the acceptor sites of translating ribosomes (By similarity).</text>
</comment>
<comment type="similarity">
    <text evidence="6">Belongs to the RelA/SpoT family.</text>
</comment>